<dbReference type="EC" id="6.1.1.14" evidence="1"/>
<dbReference type="EMBL" id="CP001013">
    <property type="protein sequence ID" value="ACB32490.1"/>
    <property type="molecule type" value="Genomic_DNA"/>
</dbReference>
<dbReference type="RefSeq" id="WP_012345252.1">
    <property type="nucleotide sequence ID" value="NC_010524.1"/>
</dbReference>
<dbReference type="SMR" id="B1Y7P2"/>
<dbReference type="STRING" id="395495.Lcho_0215"/>
<dbReference type="KEGG" id="lch:Lcho_0215"/>
<dbReference type="eggNOG" id="COG0751">
    <property type="taxonomic scope" value="Bacteria"/>
</dbReference>
<dbReference type="HOGENOM" id="CLU_007220_2_2_4"/>
<dbReference type="OrthoDB" id="9775440at2"/>
<dbReference type="Proteomes" id="UP000001693">
    <property type="component" value="Chromosome"/>
</dbReference>
<dbReference type="GO" id="GO:0005829">
    <property type="term" value="C:cytosol"/>
    <property type="evidence" value="ECO:0007669"/>
    <property type="project" value="TreeGrafter"/>
</dbReference>
<dbReference type="GO" id="GO:0004814">
    <property type="term" value="F:arginine-tRNA ligase activity"/>
    <property type="evidence" value="ECO:0007669"/>
    <property type="project" value="InterPro"/>
</dbReference>
<dbReference type="GO" id="GO:0005524">
    <property type="term" value="F:ATP binding"/>
    <property type="evidence" value="ECO:0007669"/>
    <property type="project" value="UniProtKB-UniRule"/>
</dbReference>
<dbReference type="GO" id="GO:0004820">
    <property type="term" value="F:glycine-tRNA ligase activity"/>
    <property type="evidence" value="ECO:0007669"/>
    <property type="project" value="UniProtKB-UniRule"/>
</dbReference>
<dbReference type="GO" id="GO:0006420">
    <property type="term" value="P:arginyl-tRNA aminoacylation"/>
    <property type="evidence" value="ECO:0007669"/>
    <property type="project" value="InterPro"/>
</dbReference>
<dbReference type="GO" id="GO:0006426">
    <property type="term" value="P:glycyl-tRNA aminoacylation"/>
    <property type="evidence" value="ECO:0007669"/>
    <property type="project" value="UniProtKB-UniRule"/>
</dbReference>
<dbReference type="Gene3D" id="1.10.730.10">
    <property type="entry name" value="Isoleucyl-tRNA Synthetase, Domain 1"/>
    <property type="match status" value="1"/>
</dbReference>
<dbReference type="HAMAP" id="MF_00255">
    <property type="entry name" value="Gly_tRNA_synth_beta"/>
    <property type="match status" value="1"/>
</dbReference>
<dbReference type="InterPro" id="IPR008909">
    <property type="entry name" value="DALR_anticod-bd"/>
</dbReference>
<dbReference type="InterPro" id="IPR015944">
    <property type="entry name" value="Gly-tRNA-synth_bsu"/>
</dbReference>
<dbReference type="InterPro" id="IPR006194">
    <property type="entry name" value="Gly-tRNA-synth_heterodimer"/>
</dbReference>
<dbReference type="NCBIfam" id="TIGR00211">
    <property type="entry name" value="glyS"/>
    <property type="match status" value="1"/>
</dbReference>
<dbReference type="PANTHER" id="PTHR30075:SF2">
    <property type="entry name" value="GLYCINE--TRNA LIGASE, CHLOROPLASTIC_MITOCHONDRIAL 2"/>
    <property type="match status" value="1"/>
</dbReference>
<dbReference type="PANTHER" id="PTHR30075">
    <property type="entry name" value="GLYCYL-TRNA SYNTHETASE"/>
    <property type="match status" value="1"/>
</dbReference>
<dbReference type="Pfam" id="PF05746">
    <property type="entry name" value="DALR_1"/>
    <property type="match status" value="1"/>
</dbReference>
<dbReference type="Pfam" id="PF02092">
    <property type="entry name" value="tRNA_synt_2f"/>
    <property type="match status" value="1"/>
</dbReference>
<dbReference type="PRINTS" id="PR01045">
    <property type="entry name" value="TRNASYNTHGB"/>
</dbReference>
<dbReference type="SUPFAM" id="SSF109604">
    <property type="entry name" value="HD-domain/PDEase-like"/>
    <property type="match status" value="1"/>
</dbReference>
<dbReference type="PROSITE" id="PS50861">
    <property type="entry name" value="AA_TRNA_LIGASE_II_GLYAB"/>
    <property type="match status" value="1"/>
</dbReference>
<reference key="1">
    <citation type="submission" date="2008-03" db="EMBL/GenBank/DDBJ databases">
        <title>Complete sequence of Leptothrix cholodnii SP-6.</title>
        <authorList>
            <consortium name="US DOE Joint Genome Institute"/>
            <person name="Copeland A."/>
            <person name="Lucas S."/>
            <person name="Lapidus A."/>
            <person name="Glavina del Rio T."/>
            <person name="Dalin E."/>
            <person name="Tice H."/>
            <person name="Bruce D."/>
            <person name="Goodwin L."/>
            <person name="Pitluck S."/>
            <person name="Chertkov O."/>
            <person name="Brettin T."/>
            <person name="Detter J.C."/>
            <person name="Han C."/>
            <person name="Kuske C.R."/>
            <person name="Schmutz J."/>
            <person name="Larimer F."/>
            <person name="Land M."/>
            <person name="Hauser L."/>
            <person name="Kyrpides N."/>
            <person name="Lykidis A."/>
            <person name="Emerson D."/>
            <person name="Richardson P."/>
        </authorList>
    </citation>
    <scope>NUCLEOTIDE SEQUENCE [LARGE SCALE GENOMIC DNA]</scope>
    <source>
        <strain>ATCC 51168 / LMG 8142 / SP-6</strain>
    </source>
</reference>
<evidence type="ECO:0000255" key="1">
    <source>
        <dbReference type="HAMAP-Rule" id="MF_00255"/>
    </source>
</evidence>
<comment type="catalytic activity">
    <reaction evidence="1">
        <text>tRNA(Gly) + glycine + ATP = glycyl-tRNA(Gly) + AMP + diphosphate</text>
        <dbReference type="Rhea" id="RHEA:16013"/>
        <dbReference type="Rhea" id="RHEA-COMP:9664"/>
        <dbReference type="Rhea" id="RHEA-COMP:9683"/>
        <dbReference type="ChEBI" id="CHEBI:30616"/>
        <dbReference type="ChEBI" id="CHEBI:33019"/>
        <dbReference type="ChEBI" id="CHEBI:57305"/>
        <dbReference type="ChEBI" id="CHEBI:78442"/>
        <dbReference type="ChEBI" id="CHEBI:78522"/>
        <dbReference type="ChEBI" id="CHEBI:456215"/>
        <dbReference type="EC" id="6.1.1.14"/>
    </reaction>
</comment>
<comment type="subunit">
    <text evidence="1">Tetramer of two alpha and two beta subunits.</text>
</comment>
<comment type="subcellular location">
    <subcellularLocation>
        <location evidence="1">Cytoplasm</location>
    </subcellularLocation>
</comment>
<comment type="similarity">
    <text evidence="1">Belongs to the class-II aminoacyl-tRNA synthetase family.</text>
</comment>
<keyword id="KW-0030">Aminoacyl-tRNA synthetase</keyword>
<keyword id="KW-0067">ATP-binding</keyword>
<keyword id="KW-0963">Cytoplasm</keyword>
<keyword id="KW-0436">Ligase</keyword>
<keyword id="KW-0547">Nucleotide-binding</keyword>
<keyword id="KW-0648">Protein biosynthesis</keyword>
<keyword id="KW-1185">Reference proteome</keyword>
<sequence>MSHPNLLVELFVEELPPKALKKLGESFAGTLAASLKAGGLAGADAVVTPFASPRRLAVHVTGVAAKAADKSVLHKLMPVAVALDAAGNATPALLKKLAALGADASVVPSLKRQPDGKAEALFLDSQVAGATLAEGLQKALDDALAKLPIPKVMGYQLADGWTSVNFVRPAHGLVALHGDDVVPVATLGLVAGRSTHGHRFEAAVPTVELRHADSYAEQLETEGAVIAGFEARRAEIVRQLDAAAAAQGLKPIDDDALLDEVTALVERPNVLVCQFEPEFLAVPQECLILTMKANQKYFPLLDAAGKLTHKFLIVSNIRPDDASAVIGGNERVVRPRLADAKFFFDQDRKKTLESRVPGLARVVYHGKLGTQGERAERVRAIGHAIVNQLRMATIPYTVDAQDEFAVLDSKVQQAALLAKTDLLTDMVGEFPELQGIMGGYYARHEGLRDGVAIAIEDHYKPRFAGDALPRNHTGTVLALADKLETLVGLFGIGQLPTGDRDPFALRRHALGVIRILVEKNLPLDLPALLNGAVPAFGELIEDPRLALFDFMRDRLAVNLRDQGYSAQEVDAVLALEPARLGDVPKRLAAVRAFAALPEAAALAAANKRIGNILKKAEGTVEARIDAALLAEPAEQQLAAALAQVQPGADALFAQGEYAASLQALAALKAPVDAFFDDVMVNAEDPALRANRLGLLATLHGAMNRVAELARLAA</sequence>
<name>SYGB_LEPCP</name>
<organism>
    <name type="scientific">Leptothrix cholodnii (strain ATCC 51168 / LMG 8142 / SP-6)</name>
    <name type="common">Leptothrix discophora (strain SP-6)</name>
    <dbReference type="NCBI Taxonomy" id="395495"/>
    <lineage>
        <taxon>Bacteria</taxon>
        <taxon>Pseudomonadati</taxon>
        <taxon>Pseudomonadota</taxon>
        <taxon>Betaproteobacteria</taxon>
        <taxon>Burkholderiales</taxon>
        <taxon>Sphaerotilaceae</taxon>
        <taxon>Leptothrix</taxon>
    </lineage>
</organism>
<feature type="chain" id="PRO_1000101296" description="Glycine--tRNA ligase beta subunit">
    <location>
        <begin position="1"/>
        <end position="713"/>
    </location>
</feature>
<proteinExistence type="inferred from homology"/>
<gene>
    <name evidence="1" type="primary">glyS</name>
    <name type="ordered locus">Lcho_0215</name>
</gene>
<accession>B1Y7P2</accession>
<protein>
    <recommendedName>
        <fullName evidence="1">Glycine--tRNA ligase beta subunit</fullName>
        <ecNumber evidence="1">6.1.1.14</ecNumber>
    </recommendedName>
    <alternativeName>
        <fullName evidence="1">Glycyl-tRNA synthetase beta subunit</fullName>
        <shortName evidence="1">GlyRS</shortName>
    </alternativeName>
</protein>